<organism>
    <name type="scientific">Burkholderia vietnamiensis (strain G4 / LMG 22486)</name>
    <name type="common">Burkholderia cepacia (strain R1808)</name>
    <dbReference type="NCBI Taxonomy" id="269482"/>
    <lineage>
        <taxon>Bacteria</taxon>
        <taxon>Pseudomonadati</taxon>
        <taxon>Pseudomonadota</taxon>
        <taxon>Betaproteobacteria</taxon>
        <taxon>Burkholderiales</taxon>
        <taxon>Burkholderiaceae</taxon>
        <taxon>Burkholderia</taxon>
        <taxon>Burkholderia cepacia complex</taxon>
    </lineage>
</organism>
<dbReference type="EMBL" id="CP000614">
    <property type="protein sequence ID" value="ABO56139.1"/>
    <property type="molecule type" value="Genomic_DNA"/>
</dbReference>
<dbReference type="SMR" id="A4JIN6"/>
<dbReference type="KEGG" id="bvi:Bcep1808_3148"/>
<dbReference type="eggNOG" id="COG1677">
    <property type="taxonomic scope" value="Bacteria"/>
</dbReference>
<dbReference type="HOGENOM" id="CLU_147249_0_2_4"/>
<dbReference type="Proteomes" id="UP000002287">
    <property type="component" value="Chromosome 1"/>
</dbReference>
<dbReference type="GO" id="GO:0009425">
    <property type="term" value="C:bacterial-type flagellum basal body"/>
    <property type="evidence" value="ECO:0007669"/>
    <property type="project" value="UniProtKB-SubCell"/>
</dbReference>
<dbReference type="GO" id="GO:0003774">
    <property type="term" value="F:cytoskeletal motor activity"/>
    <property type="evidence" value="ECO:0007669"/>
    <property type="project" value="InterPro"/>
</dbReference>
<dbReference type="GO" id="GO:0005198">
    <property type="term" value="F:structural molecule activity"/>
    <property type="evidence" value="ECO:0007669"/>
    <property type="project" value="InterPro"/>
</dbReference>
<dbReference type="GO" id="GO:0071973">
    <property type="term" value="P:bacterial-type flagellum-dependent cell motility"/>
    <property type="evidence" value="ECO:0007669"/>
    <property type="project" value="InterPro"/>
</dbReference>
<dbReference type="HAMAP" id="MF_00724">
    <property type="entry name" value="FliE"/>
    <property type="match status" value="1"/>
</dbReference>
<dbReference type="InterPro" id="IPR001624">
    <property type="entry name" value="FliE"/>
</dbReference>
<dbReference type="NCBIfam" id="TIGR00205">
    <property type="entry name" value="fliE"/>
    <property type="match status" value="1"/>
</dbReference>
<dbReference type="PANTHER" id="PTHR34653">
    <property type="match status" value="1"/>
</dbReference>
<dbReference type="PANTHER" id="PTHR34653:SF1">
    <property type="entry name" value="FLAGELLAR HOOK-BASAL BODY COMPLEX PROTEIN FLIE"/>
    <property type="match status" value="1"/>
</dbReference>
<dbReference type="Pfam" id="PF02049">
    <property type="entry name" value="FliE"/>
    <property type="match status" value="1"/>
</dbReference>
<dbReference type="PRINTS" id="PR01006">
    <property type="entry name" value="FLGHOOKFLIE"/>
</dbReference>
<sequence>MVANVSGIGSVLQQMQAMAAQANGGVASPAAALAGSGAATAGTFASAMKASLDKISGDQQHALGEARAFEVGAANVSLNDVMVDMQKANIGFQFGLQVRNKLVSAYNEVMQMSV</sequence>
<reference key="1">
    <citation type="submission" date="2007-03" db="EMBL/GenBank/DDBJ databases">
        <title>Complete sequence of chromosome 1 of Burkholderia vietnamiensis G4.</title>
        <authorList>
            <consortium name="US DOE Joint Genome Institute"/>
            <person name="Copeland A."/>
            <person name="Lucas S."/>
            <person name="Lapidus A."/>
            <person name="Barry K."/>
            <person name="Detter J.C."/>
            <person name="Glavina del Rio T."/>
            <person name="Hammon N."/>
            <person name="Israni S."/>
            <person name="Dalin E."/>
            <person name="Tice H."/>
            <person name="Pitluck S."/>
            <person name="Chain P."/>
            <person name="Malfatti S."/>
            <person name="Shin M."/>
            <person name="Vergez L."/>
            <person name="Schmutz J."/>
            <person name="Larimer F."/>
            <person name="Land M."/>
            <person name="Hauser L."/>
            <person name="Kyrpides N."/>
            <person name="Tiedje J."/>
            <person name="Richardson P."/>
        </authorList>
    </citation>
    <scope>NUCLEOTIDE SEQUENCE [LARGE SCALE GENOMIC DNA]</scope>
    <source>
        <strain>G4 / LMG 22486</strain>
    </source>
</reference>
<gene>
    <name evidence="1" type="primary">fliE</name>
    <name type="ordered locus">Bcep1808_3148</name>
</gene>
<accession>A4JIN6</accession>
<feature type="chain" id="PRO_1000045852" description="Flagellar hook-basal body complex protein FliE">
    <location>
        <begin position="1"/>
        <end position="114"/>
    </location>
</feature>
<protein>
    <recommendedName>
        <fullName evidence="1">Flagellar hook-basal body complex protein FliE</fullName>
    </recommendedName>
</protein>
<evidence type="ECO:0000255" key="1">
    <source>
        <dbReference type="HAMAP-Rule" id="MF_00724"/>
    </source>
</evidence>
<keyword id="KW-0975">Bacterial flagellum</keyword>
<name>FLIE_BURVG</name>
<comment type="subcellular location">
    <subcellularLocation>
        <location evidence="1">Bacterial flagellum basal body</location>
    </subcellularLocation>
</comment>
<comment type="similarity">
    <text evidence="1">Belongs to the FliE family.</text>
</comment>
<proteinExistence type="inferred from homology"/>